<accession>Q1H4N1</accession>
<keyword id="KW-1185">Reference proteome</keyword>
<keyword id="KW-0687">Ribonucleoprotein</keyword>
<keyword id="KW-0689">Ribosomal protein</keyword>
<keyword id="KW-0694">RNA-binding</keyword>
<keyword id="KW-0699">rRNA-binding</keyword>
<proteinExistence type="inferred from homology"/>
<comment type="function">
    <text evidence="1">Binds the lower part of the 30S subunit head. Binds mRNA in the 70S ribosome, positioning it for translation.</text>
</comment>
<comment type="subunit">
    <text evidence="1">Part of the 30S ribosomal subunit. Forms a tight complex with proteins S10 and S14.</text>
</comment>
<comment type="similarity">
    <text evidence="1">Belongs to the universal ribosomal protein uS3 family.</text>
</comment>
<organism>
    <name type="scientific">Methylobacillus flagellatus (strain ATCC 51484 / DSM 6875 / VKM B-1610 / KT)</name>
    <dbReference type="NCBI Taxonomy" id="265072"/>
    <lineage>
        <taxon>Bacteria</taxon>
        <taxon>Pseudomonadati</taxon>
        <taxon>Pseudomonadota</taxon>
        <taxon>Betaproteobacteria</taxon>
        <taxon>Nitrosomonadales</taxon>
        <taxon>Methylophilaceae</taxon>
        <taxon>Methylobacillus</taxon>
    </lineage>
</organism>
<sequence length="236" mass="26341">MGQKIHPFGFRLSVQKNWSSRWYANSNNFPAMLSSDIKVREFLKKKLAHAAVSKIVIERPAKNAKITIYSARPGIVIGKKGEDIESLRSGLQGLMGVPVHLNIEEVRKPEIDATLIAESIAQQLEKRVMFRRAMKRAMQNAMRLGAQGIKIMSSGRLNGIEIARTEWYREGRVPLHTLRADIDYGVAEAKTTYGIIGIKVWVFKGEVFGNKIEQAAQPAEPEKKVRKSGAKNAATS</sequence>
<gene>
    <name evidence="1" type="primary">rpsC</name>
    <name type="ordered locus">Mfla_0285</name>
</gene>
<protein>
    <recommendedName>
        <fullName evidence="1">Small ribosomal subunit protein uS3</fullName>
    </recommendedName>
    <alternativeName>
        <fullName evidence="3">30S ribosomal protein S3</fullName>
    </alternativeName>
</protein>
<dbReference type="EMBL" id="CP000284">
    <property type="protein sequence ID" value="ABE48556.1"/>
    <property type="molecule type" value="Genomic_DNA"/>
</dbReference>
<dbReference type="RefSeq" id="WP_011478653.1">
    <property type="nucleotide sequence ID" value="NC_007947.1"/>
</dbReference>
<dbReference type="SMR" id="Q1H4N1"/>
<dbReference type="STRING" id="265072.Mfla_0285"/>
<dbReference type="KEGG" id="mfa:Mfla_0285"/>
<dbReference type="eggNOG" id="COG0092">
    <property type="taxonomic scope" value="Bacteria"/>
</dbReference>
<dbReference type="HOGENOM" id="CLU_058591_0_2_4"/>
<dbReference type="OrthoDB" id="9806396at2"/>
<dbReference type="Proteomes" id="UP000002440">
    <property type="component" value="Chromosome"/>
</dbReference>
<dbReference type="GO" id="GO:0022627">
    <property type="term" value="C:cytosolic small ribosomal subunit"/>
    <property type="evidence" value="ECO:0007669"/>
    <property type="project" value="TreeGrafter"/>
</dbReference>
<dbReference type="GO" id="GO:0003729">
    <property type="term" value="F:mRNA binding"/>
    <property type="evidence" value="ECO:0007669"/>
    <property type="project" value="UniProtKB-UniRule"/>
</dbReference>
<dbReference type="GO" id="GO:0019843">
    <property type="term" value="F:rRNA binding"/>
    <property type="evidence" value="ECO:0007669"/>
    <property type="project" value="UniProtKB-UniRule"/>
</dbReference>
<dbReference type="GO" id="GO:0003735">
    <property type="term" value="F:structural constituent of ribosome"/>
    <property type="evidence" value="ECO:0007669"/>
    <property type="project" value="InterPro"/>
</dbReference>
<dbReference type="GO" id="GO:0006412">
    <property type="term" value="P:translation"/>
    <property type="evidence" value="ECO:0007669"/>
    <property type="project" value="UniProtKB-UniRule"/>
</dbReference>
<dbReference type="CDD" id="cd02412">
    <property type="entry name" value="KH-II_30S_S3"/>
    <property type="match status" value="1"/>
</dbReference>
<dbReference type="FunFam" id="3.30.1140.32:FF:000001">
    <property type="entry name" value="30S ribosomal protein S3"/>
    <property type="match status" value="1"/>
</dbReference>
<dbReference type="FunFam" id="3.30.300.20:FF:000001">
    <property type="entry name" value="30S ribosomal protein S3"/>
    <property type="match status" value="1"/>
</dbReference>
<dbReference type="Gene3D" id="3.30.300.20">
    <property type="match status" value="1"/>
</dbReference>
<dbReference type="Gene3D" id="3.30.1140.32">
    <property type="entry name" value="Ribosomal protein S3, C-terminal domain"/>
    <property type="match status" value="1"/>
</dbReference>
<dbReference type="HAMAP" id="MF_01309_B">
    <property type="entry name" value="Ribosomal_uS3_B"/>
    <property type="match status" value="1"/>
</dbReference>
<dbReference type="InterPro" id="IPR004087">
    <property type="entry name" value="KH_dom"/>
</dbReference>
<dbReference type="InterPro" id="IPR015946">
    <property type="entry name" value="KH_dom-like_a/b"/>
</dbReference>
<dbReference type="InterPro" id="IPR004044">
    <property type="entry name" value="KH_dom_type_2"/>
</dbReference>
<dbReference type="InterPro" id="IPR009019">
    <property type="entry name" value="KH_sf_prok-type"/>
</dbReference>
<dbReference type="InterPro" id="IPR036419">
    <property type="entry name" value="Ribosomal_S3_C_sf"/>
</dbReference>
<dbReference type="InterPro" id="IPR005704">
    <property type="entry name" value="Ribosomal_uS3_bac-typ"/>
</dbReference>
<dbReference type="InterPro" id="IPR001351">
    <property type="entry name" value="Ribosomal_uS3_C"/>
</dbReference>
<dbReference type="InterPro" id="IPR018280">
    <property type="entry name" value="Ribosomal_uS3_CS"/>
</dbReference>
<dbReference type="NCBIfam" id="TIGR01009">
    <property type="entry name" value="rpsC_bact"/>
    <property type="match status" value="1"/>
</dbReference>
<dbReference type="PANTHER" id="PTHR11760">
    <property type="entry name" value="30S/40S RIBOSOMAL PROTEIN S3"/>
    <property type="match status" value="1"/>
</dbReference>
<dbReference type="PANTHER" id="PTHR11760:SF19">
    <property type="entry name" value="SMALL RIBOSOMAL SUBUNIT PROTEIN US3C"/>
    <property type="match status" value="1"/>
</dbReference>
<dbReference type="Pfam" id="PF07650">
    <property type="entry name" value="KH_2"/>
    <property type="match status" value="1"/>
</dbReference>
<dbReference type="Pfam" id="PF00189">
    <property type="entry name" value="Ribosomal_S3_C"/>
    <property type="match status" value="1"/>
</dbReference>
<dbReference type="SMART" id="SM00322">
    <property type="entry name" value="KH"/>
    <property type="match status" value="1"/>
</dbReference>
<dbReference type="SUPFAM" id="SSF54814">
    <property type="entry name" value="Prokaryotic type KH domain (KH-domain type II)"/>
    <property type="match status" value="1"/>
</dbReference>
<dbReference type="SUPFAM" id="SSF54821">
    <property type="entry name" value="Ribosomal protein S3 C-terminal domain"/>
    <property type="match status" value="1"/>
</dbReference>
<dbReference type="PROSITE" id="PS50823">
    <property type="entry name" value="KH_TYPE_2"/>
    <property type="match status" value="1"/>
</dbReference>
<dbReference type="PROSITE" id="PS00548">
    <property type="entry name" value="RIBOSOMAL_S3"/>
    <property type="match status" value="1"/>
</dbReference>
<name>RS3_METFK</name>
<reference key="1">
    <citation type="submission" date="2006-03" db="EMBL/GenBank/DDBJ databases">
        <title>Complete sequence of Methylobacillus flagellatus KT.</title>
        <authorList>
            <consortium name="US DOE Joint Genome Institute"/>
            <person name="Copeland A."/>
            <person name="Lucas S."/>
            <person name="Lapidus A."/>
            <person name="Barry K."/>
            <person name="Detter J.C."/>
            <person name="Glavina del Rio T."/>
            <person name="Hammon N."/>
            <person name="Israni S."/>
            <person name="Dalin E."/>
            <person name="Tice H."/>
            <person name="Pitluck S."/>
            <person name="Brettin T."/>
            <person name="Bruce D."/>
            <person name="Han C."/>
            <person name="Tapia R."/>
            <person name="Saunders E."/>
            <person name="Gilna P."/>
            <person name="Schmutz J."/>
            <person name="Larimer F."/>
            <person name="Land M."/>
            <person name="Kyrpides N."/>
            <person name="Anderson I."/>
            <person name="Richardson P."/>
        </authorList>
    </citation>
    <scope>NUCLEOTIDE SEQUENCE [LARGE SCALE GENOMIC DNA]</scope>
    <source>
        <strain>ATCC 51484 / DSM 6875 / VKM B-1610 / KT</strain>
    </source>
</reference>
<feature type="chain" id="PRO_0000293825" description="Small ribosomal subunit protein uS3">
    <location>
        <begin position="1"/>
        <end position="236"/>
    </location>
</feature>
<feature type="domain" description="KH type-2" evidence="1">
    <location>
        <begin position="39"/>
        <end position="107"/>
    </location>
</feature>
<feature type="region of interest" description="Disordered" evidence="2">
    <location>
        <begin position="215"/>
        <end position="236"/>
    </location>
</feature>
<evidence type="ECO:0000255" key="1">
    <source>
        <dbReference type="HAMAP-Rule" id="MF_01309"/>
    </source>
</evidence>
<evidence type="ECO:0000256" key="2">
    <source>
        <dbReference type="SAM" id="MobiDB-lite"/>
    </source>
</evidence>
<evidence type="ECO:0000305" key="3"/>